<accession>B3DRN7</accession>
<comment type="function">
    <text evidence="1">Protein modifier that is covalently attached to lysine residues of substrate proteins, thereby targeting them for proteasomal degradation. The tagging system is termed pupylation.</text>
</comment>
<comment type="pathway">
    <text evidence="1">Protein degradation; proteasomal Pup-dependent pathway.</text>
</comment>
<comment type="subunit">
    <text evidence="1">Strongly interacts with the proteasome-associated ATPase ARC through a hydrophobic interface; the interacting region of Pup lies in its C-terminal half. There is one Pup binding site per ARC hexamer ring.</text>
</comment>
<comment type="domain">
    <text evidence="1">The N-terminal unstructured half of Pup provides a signal required to initiate unfolding and degradation by the proteasome but is not needed for pupylation, while the C-terminal helical half of Pup interacts with ARC to target proteins to the proteasome.</text>
</comment>
<comment type="similarity">
    <text evidence="1">Belongs to the prokaryotic ubiquitin-like protein family.</text>
</comment>
<feature type="chain" id="PRO_0000390571" description="Prokaryotic ubiquitin-like protein Pup">
    <location>
        <begin position="1"/>
        <end position="67"/>
    </location>
</feature>
<feature type="region of interest" description="Disordered" evidence="2">
    <location>
        <begin position="1"/>
        <end position="36"/>
    </location>
</feature>
<feature type="region of interest" description="ARC ATPase binding" evidence="1">
    <location>
        <begin position="23"/>
        <end position="61"/>
    </location>
</feature>
<feature type="cross-link" description="Isoglutamyl lysine isopeptide (Glu-Lys) (interchain with K-? in acceptor proteins)" evidence="1">
    <location>
        <position position="67"/>
    </location>
</feature>
<dbReference type="EMBL" id="CP000605">
    <property type="protein sequence ID" value="ACD99419.1"/>
    <property type="molecule type" value="Genomic_DNA"/>
</dbReference>
<dbReference type="RefSeq" id="WP_010080938.1">
    <property type="nucleotide sequence ID" value="NZ_AABM02000004.1"/>
</dbReference>
<dbReference type="SMR" id="B3DRN7"/>
<dbReference type="KEGG" id="blj:BLD_1974"/>
<dbReference type="HOGENOM" id="CLU_183816_0_0_11"/>
<dbReference type="UniPathway" id="UPA00997"/>
<dbReference type="Proteomes" id="UP000002419">
    <property type="component" value="Chromosome"/>
</dbReference>
<dbReference type="GO" id="GO:0070628">
    <property type="term" value="F:proteasome binding"/>
    <property type="evidence" value="ECO:0007669"/>
    <property type="project" value="UniProtKB-UniRule"/>
</dbReference>
<dbReference type="GO" id="GO:0031386">
    <property type="term" value="F:protein tag activity"/>
    <property type="evidence" value="ECO:0007669"/>
    <property type="project" value="UniProtKB-UniRule"/>
</dbReference>
<dbReference type="GO" id="GO:0019941">
    <property type="term" value="P:modification-dependent protein catabolic process"/>
    <property type="evidence" value="ECO:0007669"/>
    <property type="project" value="UniProtKB-UniRule"/>
</dbReference>
<dbReference type="GO" id="GO:0010498">
    <property type="term" value="P:proteasomal protein catabolic process"/>
    <property type="evidence" value="ECO:0007669"/>
    <property type="project" value="UniProtKB-UniRule"/>
</dbReference>
<dbReference type="GO" id="GO:0070490">
    <property type="term" value="P:protein pupylation"/>
    <property type="evidence" value="ECO:0007669"/>
    <property type="project" value="UniProtKB-UniRule"/>
</dbReference>
<dbReference type="HAMAP" id="MF_02106">
    <property type="entry name" value="Pup"/>
    <property type="match status" value="1"/>
</dbReference>
<dbReference type="InterPro" id="IPR008515">
    <property type="entry name" value="Ubiquitin-like_Pup"/>
</dbReference>
<dbReference type="NCBIfam" id="TIGR03687">
    <property type="entry name" value="pupylate_cterm"/>
    <property type="match status" value="1"/>
</dbReference>
<dbReference type="Pfam" id="PF05639">
    <property type="entry name" value="Pup"/>
    <property type="match status" value="1"/>
</dbReference>
<proteinExistence type="inferred from homology"/>
<name>PUP_BIFLD</name>
<protein>
    <recommendedName>
        <fullName evidence="1">Prokaryotic ubiquitin-like protein Pup</fullName>
    </recommendedName>
    <alternativeName>
        <fullName evidence="1">Bacterial ubiquitin-like modifier</fullName>
    </alternativeName>
</protein>
<reference key="1">
    <citation type="journal article" date="2008" name="BMC Genomics">
        <title>Comparative genomic analysis of the gut bacterium Bifidobacterium longum reveals loci susceptible to deletion during pure culture growth.</title>
        <authorList>
            <person name="Lee J.H."/>
            <person name="Karamychev V.N."/>
            <person name="Kozyavkin S.A."/>
            <person name="Mills D."/>
            <person name="Pavlov A.R."/>
            <person name="Pavlova N.V."/>
            <person name="Polouchine N.N."/>
            <person name="Richardson P.M."/>
            <person name="Shakhova V.V."/>
            <person name="Slesarev A.I."/>
            <person name="Weimer B."/>
            <person name="O'Sullivan D.J."/>
        </authorList>
    </citation>
    <scope>NUCLEOTIDE SEQUENCE [LARGE SCALE GENOMIC DNA]</scope>
    <source>
        <strain>DJO10A</strain>
    </source>
</reference>
<gene>
    <name evidence="1" type="primary">pup</name>
    <name type="ordered locus">BLD_1974</name>
</gene>
<organism>
    <name type="scientific">Bifidobacterium longum (strain DJO10A)</name>
    <dbReference type="NCBI Taxonomy" id="205913"/>
    <lineage>
        <taxon>Bacteria</taxon>
        <taxon>Bacillati</taxon>
        <taxon>Actinomycetota</taxon>
        <taxon>Actinomycetes</taxon>
        <taxon>Bifidobacteriales</taxon>
        <taxon>Bifidobacteriaceae</taxon>
        <taxon>Bifidobacterium</taxon>
    </lineage>
</organism>
<sequence>MPQQFEQPQAQQAATQEDDALATTQAAAQTESADQADVLDDILDDIESTLETNAEEYVNSFVQKGGE</sequence>
<evidence type="ECO:0000255" key="1">
    <source>
        <dbReference type="HAMAP-Rule" id="MF_02106"/>
    </source>
</evidence>
<evidence type="ECO:0000256" key="2">
    <source>
        <dbReference type="SAM" id="MobiDB-lite"/>
    </source>
</evidence>
<keyword id="KW-1017">Isopeptide bond</keyword>
<keyword id="KW-0833">Ubl conjugation pathway</keyword>